<name>OGT_THEBM</name>
<accession>F0LIT8</accession>
<dbReference type="EC" id="2.1.1.63" evidence="1"/>
<dbReference type="EMBL" id="CP002372">
    <property type="protein sequence ID" value="ADT84540.1"/>
    <property type="molecule type" value="Genomic_DNA"/>
</dbReference>
<dbReference type="RefSeq" id="WP_013467838.1">
    <property type="nucleotide sequence ID" value="NC_014804.1"/>
</dbReference>
<dbReference type="SMR" id="F0LIT8"/>
<dbReference type="GeneID" id="10041881"/>
<dbReference type="KEGG" id="tba:TERMP_01565"/>
<dbReference type="PATRIC" id="fig|391623.17.peg.1565"/>
<dbReference type="eggNOG" id="arCOG02724">
    <property type="taxonomic scope" value="Archaea"/>
</dbReference>
<dbReference type="HOGENOM" id="CLU_000445_52_2_2"/>
<dbReference type="OrthoDB" id="372118at2157"/>
<dbReference type="Proteomes" id="UP000007478">
    <property type="component" value="Chromosome"/>
</dbReference>
<dbReference type="GO" id="GO:0005737">
    <property type="term" value="C:cytoplasm"/>
    <property type="evidence" value="ECO:0007669"/>
    <property type="project" value="UniProtKB-SubCell"/>
</dbReference>
<dbReference type="GO" id="GO:0003908">
    <property type="term" value="F:methylated-DNA-[protein]-cysteine S-methyltransferase activity"/>
    <property type="evidence" value="ECO:0007669"/>
    <property type="project" value="UniProtKB-UniRule"/>
</dbReference>
<dbReference type="GO" id="GO:0006307">
    <property type="term" value="P:DNA alkylation repair"/>
    <property type="evidence" value="ECO:0007669"/>
    <property type="project" value="UniProtKB-UniRule"/>
</dbReference>
<dbReference type="GO" id="GO:0032259">
    <property type="term" value="P:methylation"/>
    <property type="evidence" value="ECO:0007669"/>
    <property type="project" value="UniProtKB-KW"/>
</dbReference>
<dbReference type="CDD" id="cd06445">
    <property type="entry name" value="ATase"/>
    <property type="match status" value="1"/>
</dbReference>
<dbReference type="FunFam" id="1.10.10.10:FF:000214">
    <property type="entry name" value="Methylated-DNA--protein-cysteine methyltransferase"/>
    <property type="match status" value="1"/>
</dbReference>
<dbReference type="Gene3D" id="3.30.160.70">
    <property type="entry name" value="Methylated DNA-protein cysteine methyltransferase domain"/>
    <property type="match status" value="1"/>
</dbReference>
<dbReference type="Gene3D" id="1.10.10.10">
    <property type="entry name" value="Winged helix-like DNA-binding domain superfamily/Winged helix DNA-binding domain"/>
    <property type="match status" value="1"/>
</dbReference>
<dbReference type="HAMAP" id="MF_00772">
    <property type="entry name" value="OGT"/>
    <property type="match status" value="1"/>
</dbReference>
<dbReference type="InterPro" id="IPR054936">
    <property type="entry name" value="DNA_protcyst_Mta_Thcoc"/>
</dbReference>
<dbReference type="InterPro" id="IPR001497">
    <property type="entry name" value="MethylDNA_cys_MeTrfase_AS"/>
</dbReference>
<dbReference type="InterPro" id="IPR014048">
    <property type="entry name" value="MethylDNA_cys_MeTrfase_DNA-bd"/>
</dbReference>
<dbReference type="InterPro" id="IPR036217">
    <property type="entry name" value="MethylDNA_cys_MeTrfase_DNAb"/>
</dbReference>
<dbReference type="InterPro" id="IPR023546">
    <property type="entry name" value="MGMT"/>
</dbReference>
<dbReference type="InterPro" id="IPR015236">
    <property type="entry name" value="MGMT_N"/>
</dbReference>
<dbReference type="InterPro" id="IPR036631">
    <property type="entry name" value="MGMT_N_sf"/>
</dbReference>
<dbReference type="InterPro" id="IPR036388">
    <property type="entry name" value="WH-like_DNA-bd_sf"/>
</dbReference>
<dbReference type="NCBIfam" id="NF041132">
    <property type="entry name" value="DNA_protcyst_Mta_Thcoc"/>
    <property type="match status" value="1"/>
</dbReference>
<dbReference type="NCBIfam" id="TIGR00589">
    <property type="entry name" value="ogt"/>
    <property type="match status" value="1"/>
</dbReference>
<dbReference type="NCBIfam" id="NF003022">
    <property type="entry name" value="PRK03887.1"/>
    <property type="match status" value="1"/>
</dbReference>
<dbReference type="PANTHER" id="PTHR46460">
    <property type="entry name" value="METHYLATED-DNA--PROTEIN-CYSTEINE METHYLTRANSFERASE"/>
    <property type="match status" value="1"/>
</dbReference>
<dbReference type="PANTHER" id="PTHR46460:SF1">
    <property type="entry name" value="METHYLATED-DNA--PROTEIN-CYSTEINE METHYLTRANSFERASE"/>
    <property type="match status" value="1"/>
</dbReference>
<dbReference type="Pfam" id="PF01035">
    <property type="entry name" value="DNA_binding_1"/>
    <property type="match status" value="1"/>
</dbReference>
<dbReference type="Pfam" id="PF09153">
    <property type="entry name" value="MGMT_N"/>
    <property type="match status" value="1"/>
</dbReference>
<dbReference type="SUPFAM" id="SSF53155">
    <property type="entry name" value="Methylated DNA-protein cysteine methyltransferase domain"/>
    <property type="match status" value="1"/>
</dbReference>
<dbReference type="SUPFAM" id="SSF46767">
    <property type="entry name" value="Methylated DNA-protein cysteine methyltransferase, C-terminal domain"/>
    <property type="match status" value="1"/>
</dbReference>
<dbReference type="PROSITE" id="PS00374">
    <property type="entry name" value="MGMT"/>
    <property type="match status" value="1"/>
</dbReference>
<comment type="function">
    <text evidence="1">Involved in the cellular defense against the biological effects of O6-methylguanine (O6-MeG) and O4-methylthymine (O4-MeT) in DNA. Repairs the methylated nucleobase in DNA by stoichiometrically transferring the methyl group to a cysteine residue in the enzyme. This is a suicide reaction: the enzyme is irreversibly inactivated.</text>
</comment>
<comment type="catalytic activity">
    <reaction evidence="1">
        <text>a 6-O-methyl-2'-deoxyguanosine in DNA + L-cysteinyl-[protein] = S-methyl-L-cysteinyl-[protein] + a 2'-deoxyguanosine in DNA</text>
        <dbReference type="Rhea" id="RHEA:24000"/>
        <dbReference type="Rhea" id="RHEA-COMP:10131"/>
        <dbReference type="Rhea" id="RHEA-COMP:10132"/>
        <dbReference type="Rhea" id="RHEA-COMP:11367"/>
        <dbReference type="Rhea" id="RHEA-COMP:11368"/>
        <dbReference type="ChEBI" id="CHEBI:29950"/>
        <dbReference type="ChEBI" id="CHEBI:82612"/>
        <dbReference type="ChEBI" id="CHEBI:85445"/>
        <dbReference type="ChEBI" id="CHEBI:85448"/>
        <dbReference type="EC" id="2.1.1.63"/>
    </reaction>
</comment>
<comment type="catalytic activity">
    <reaction evidence="1">
        <text>a 4-O-methyl-thymidine in DNA + L-cysteinyl-[protein] = a thymidine in DNA + S-methyl-L-cysteinyl-[protein]</text>
        <dbReference type="Rhea" id="RHEA:53428"/>
        <dbReference type="Rhea" id="RHEA-COMP:10131"/>
        <dbReference type="Rhea" id="RHEA-COMP:10132"/>
        <dbReference type="Rhea" id="RHEA-COMP:13555"/>
        <dbReference type="Rhea" id="RHEA-COMP:13556"/>
        <dbReference type="ChEBI" id="CHEBI:29950"/>
        <dbReference type="ChEBI" id="CHEBI:82612"/>
        <dbReference type="ChEBI" id="CHEBI:137386"/>
        <dbReference type="ChEBI" id="CHEBI:137387"/>
        <dbReference type="EC" id="2.1.1.63"/>
    </reaction>
</comment>
<comment type="subcellular location">
    <subcellularLocation>
        <location evidence="1">Cytoplasm</location>
    </subcellularLocation>
</comment>
<comment type="miscellaneous">
    <text>This enzyme catalyzes only one turnover and therefore is not strictly catalytic. According to one definition, an enzyme is a biocatalyst that acts repeatedly and over many reaction cycles.</text>
</comment>
<comment type="similarity">
    <text evidence="1">Belongs to the MGMT family.</text>
</comment>
<gene>
    <name evidence="1" type="primary">ogt</name>
    <name type="ordered locus">TERMP_01565</name>
</gene>
<evidence type="ECO:0000255" key="1">
    <source>
        <dbReference type="HAMAP-Rule" id="MF_00772"/>
    </source>
</evidence>
<keyword id="KW-0963">Cytoplasm</keyword>
<keyword id="KW-0227">DNA damage</keyword>
<keyword id="KW-0234">DNA repair</keyword>
<keyword id="KW-0489">Methyltransferase</keyword>
<keyword id="KW-0808">Transferase</keyword>
<protein>
    <recommendedName>
        <fullName evidence="1">Methylated-DNA--protein-cysteine methyltransferase</fullName>
        <ecNumber evidence="1">2.1.1.63</ecNumber>
    </recommendedName>
    <alternativeName>
        <fullName evidence="1">6-O-methylguanine-DNA methyltransferase</fullName>
        <shortName evidence="1">MGMT</shortName>
    </alternativeName>
    <alternativeName>
        <fullName evidence="1">O-6-methylguanine-DNA-alkyltransferase</fullName>
    </alternativeName>
</protein>
<organism>
    <name type="scientific">Thermococcus barophilus (strain DSM 11836 / MP)</name>
    <dbReference type="NCBI Taxonomy" id="391623"/>
    <lineage>
        <taxon>Archaea</taxon>
        <taxon>Methanobacteriati</taxon>
        <taxon>Methanobacteriota</taxon>
        <taxon>Thermococci</taxon>
        <taxon>Thermococcales</taxon>
        <taxon>Thermococcaceae</taxon>
        <taxon>Thermococcus</taxon>
    </lineage>
</organism>
<reference key="1">
    <citation type="journal article" date="2011" name="J. Bacteriol.">
        <title>Complete genome sequence of the hyperthermophilic, piezophilic, heterotrophic, and carboxydotrophic archaeon Thermococcus barophilus MP.</title>
        <authorList>
            <person name="Vannier P."/>
            <person name="Marteinsson V.T."/>
            <person name="Fridjonsson O.H."/>
            <person name="Oger P."/>
            <person name="Jebbar M."/>
        </authorList>
    </citation>
    <scope>NUCLEOTIDE SEQUENCE [LARGE SCALE GENOMIC DNA]</scope>
    <source>
        <strain>DSM 11836 / MP</strain>
    </source>
</reference>
<sequence>MISIEKFEIFGREIWIAVFFEEKIDGVTFSLDGCEYLMERINSLKALLERRNVSVNLAEEKSDYPKIVYNVLVGDIENQDALRFLSFRGVTPFEKKVYEVLTKKVKRGSVITYGELAKMLSTSPRAVGNAMKRNPYPIIVPCHRVVLKSGLGDYTPKREYKQFLLEIEGVKGWTS</sequence>
<feature type="chain" id="PRO_0000417357" description="Methylated-DNA--protein-cysteine methyltransferase">
    <location>
        <begin position="1"/>
        <end position="175"/>
    </location>
</feature>
<feature type="active site" description="Nucleophile; methyl group acceptor" evidence="1">
    <location>
        <position position="142"/>
    </location>
</feature>
<proteinExistence type="inferred from homology"/>